<gene>
    <name evidence="1" type="primary">hemL</name>
    <name type="ordered locus">TC_0482</name>
</gene>
<protein>
    <recommendedName>
        <fullName evidence="1">Glutamate-1-semialdehyde 2,1-aminomutase</fullName>
        <shortName evidence="1">GSA</shortName>
        <ecNumber evidence="1">5.4.3.8</ecNumber>
    </recommendedName>
    <alternativeName>
        <fullName evidence="1">Glutamate-1-semialdehyde aminotransferase</fullName>
        <shortName evidence="1">GSA-AT</shortName>
    </alternativeName>
</protein>
<comment type="catalytic activity">
    <reaction evidence="1">
        <text>(S)-4-amino-5-oxopentanoate = 5-aminolevulinate</text>
        <dbReference type="Rhea" id="RHEA:14265"/>
        <dbReference type="ChEBI" id="CHEBI:57501"/>
        <dbReference type="ChEBI" id="CHEBI:356416"/>
        <dbReference type="EC" id="5.4.3.8"/>
    </reaction>
</comment>
<comment type="cofactor">
    <cofactor evidence="1">
        <name>pyridoxal 5'-phosphate</name>
        <dbReference type="ChEBI" id="CHEBI:597326"/>
    </cofactor>
</comment>
<comment type="pathway">
    <text evidence="1">Porphyrin-containing compound metabolism; protoporphyrin-IX biosynthesis; 5-aminolevulinate from L-glutamyl-tRNA(Glu): step 2/2.</text>
</comment>
<comment type="subunit">
    <text evidence="1">Homodimer.</text>
</comment>
<comment type="subcellular location">
    <subcellularLocation>
        <location evidence="1">Cytoplasm</location>
    </subcellularLocation>
</comment>
<comment type="similarity">
    <text evidence="1">Belongs to the class-III pyridoxal-phosphate-dependent aminotransferase family. HemL subfamily.</text>
</comment>
<proteinExistence type="inferred from homology"/>
<name>GSA_CHLMU</name>
<reference key="1">
    <citation type="journal article" date="2000" name="Nucleic Acids Res.">
        <title>Genome sequences of Chlamydia trachomatis MoPn and Chlamydia pneumoniae AR39.</title>
        <authorList>
            <person name="Read T.D."/>
            <person name="Brunham R.C."/>
            <person name="Shen C."/>
            <person name="Gill S.R."/>
            <person name="Heidelberg J.F."/>
            <person name="White O."/>
            <person name="Hickey E.K."/>
            <person name="Peterson J.D."/>
            <person name="Utterback T.R."/>
            <person name="Berry K.J."/>
            <person name="Bass S."/>
            <person name="Linher K.D."/>
            <person name="Weidman J.F."/>
            <person name="Khouri H.M."/>
            <person name="Craven B."/>
            <person name="Bowman C."/>
            <person name="Dodson R.J."/>
            <person name="Gwinn M.L."/>
            <person name="Nelson W.C."/>
            <person name="DeBoy R.T."/>
            <person name="Kolonay J.F."/>
            <person name="McClarty G."/>
            <person name="Salzberg S.L."/>
            <person name="Eisen J.A."/>
            <person name="Fraser C.M."/>
        </authorList>
    </citation>
    <scope>NUCLEOTIDE SEQUENCE [LARGE SCALE GENOMIC DNA]</scope>
    <source>
        <strain>MoPn / Nigg</strain>
    </source>
</reference>
<keyword id="KW-0963">Cytoplasm</keyword>
<keyword id="KW-0413">Isomerase</keyword>
<keyword id="KW-0627">Porphyrin biosynthesis</keyword>
<keyword id="KW-0663">Pyridoxal phosphate</keyword>
<accession>Q9PKI3</accession>
<evidence type="ECO:0000255" key="1">
    <source>
        <dbReference type="HAMAP-Rule" id="MF_00375"/>
    </source>
</evidence>
<dbReference type="EC" id="5.4.3.8" evidence="1"/>
<dbReference type="EMBL" id="AE002160">
    <property type="protein sequence ID" value="AAF39328.1"/>
    <property type="molecule type" value="Genomic_DNA"/>
</dbReference>
<dbReference type="PIR" id="B81697">
    <property type="entry name" value="B81697"/>
</dbReference>
<dbReference type="RefSeq" id="WP_010230564.1">
    <property type="nucleotide sequence ID" value="NZ_CP063055.1"/>
</dbReference>
<dbReference type="SMR" id="Q9PKI3"/>
<dbReference type="GeneID" id="1245840"/>
<dbReference type="KEGG" id="cmu:TC_0482"/>
<dbReference type="eggNOG" id="COG0001">
    <property type="taxonomic scope" value="Bacteria"/>
</dbReference>
<dbReference type="HOGENOM" id="CLU_016922_1_5_0"/>
<dbReference type="OrthoDB" id="9807885at2"/>
<dbReference type="UniPathway" id="UPA00251">
    <property type="reaction ID" value="UER00317"/>
</dbReference>
<dbReference type="Proteomes" id="UP000000800">
    <property type="component" value="Chromosome"/>
</dbReference>
<dbReference type="GO" id="GO:0005737">
    <property type="term" value="C:cytoplasm"/>
    <property type="evidence" value="ECO:0007669"/>
    <property type="project" value="UniProtKB-SubCell"/>
</dbReference>
<dbReference type="GO" id="GO:0042286">
    <property type="term" value="F:glutamate-1-semialdehyde 2,1-aminomutase activity"/>
    <property type="evidence" value="ECO:0007669"/>
    <property type="project" value="UniProtKB-UniRule"/>
</dbReference>
<dbReference type="GO" id="GO:0030170">
    <property type="term" value="F:pyridoxal phosphate binding"/>
    <property type="evidence" value="ECO:0007669"/>
    <property type="project" value="InterPro"/>
</dbReference>
<dbReference type="GO" id="GO:0008483">
    <property type="term" value="F:transaminase activity"/>
    <property type="evidence" value="ECO:0007669"/>
    <property type="project" value="InterPro"/>
</dbReference>
<dbReference type="GO" id="GO:0006782">
    <property type="term" value="P:protoporphyrinogen IX biosynthetic process"/>
    <property type="evidence" value="ECO:0007669"/>
    <property type="project" value="UniProtKB-UniRule"/>
</dbReference>
<dbReference type="CDD" id="cd00610">
    <property type="entry name" value="OAT_like"/>
    <property type="match status" value="1"/>
</dbReference>
<dbReference type="Gene3D" id="3.90.1150.10">
    <property type="entry name" value="Aspartate Aminotransferase, domain 1"/>
    <property type="match status" value="1"/>
</dbReference>
<dbReference type="Gene3D" id="3.40.640.10">
    <property type="entry name" value="Type I PLP-dependent aspartate aminotransferase-like (Major domain)"/>
    <property type="match status" value="1"/>
</dbReference>
<dbReference type="HAMAP" id="MF_00375">
    <property type="entry name" value="HemL_aminotrans_3"/>
    <property type="match status" value="1"/>
</dbReference>
<dbReference type="InterPro" id="IPR004639">
    <property type="entry name" value="4pyrrol_synth_GluAld_NH2Trfase"/>
</dbReference>
<dbReference type="InterPro" id="IPR005814">
    <property type="entry name" value="Aminotrans_3"/>
</dbReference>
<dbReference type="InterPro" id="IPR049704">
    <property type="entry name" value="Aminotrans_3_PPA_site"/>
</dbReference>
<dbReference type="InterPro" id="IPR015424">
    <property type="entry name" value="PyrdxlP-dep_Trfase"/>
</dbReference>
<dbReference type="InterPro" id="IPR015421">
    <property type="entry name" value="PyrdxlP-dep_Trfase_major"/>
</dbReference>
<dbReference type="InterPro" id="IPR015422">
    <property type="entry name" value="PyrdxlP-dep_Trfase_small"/>
</dbReference>
<dbReference type="NCBIfam" id="TIGR00713">
    <property type="entry name" value="hemL"/>
    <property type="match status" value="1"/>
</dbReference>
<dbReference type="NCBIfam" id="NF000818">
    <property type="entry name" value="PRK00062.1"/>
    <property type="match status" value="1"/>
</dbReference>
<dbReference type="NCBIfam" id="NF001864">
    <property type="entry name" value="PRK00615.1"/>
    <property type="match status" value="1"/>
</dbReference>
<dbReference type="PANTHER" id="PTHR43713">
    <property type="entry name" value="GLUTAMATE-1-SEMIALDEHYDE 2,1-AMINOMUTASE"/>
    <property type="match status" value="1"/>
</dbReference>
<dbReference type="PANTHER" id="PTHR43713:SF3">
    <property type="entry name" value="GLUTAMATE-1-SEMIALDEHYDE 2,1-AMINOMUTASE 1, CHLOROPLASTIC-RELATED"/>
    <property type="match status" value="1"/>
</dbReference>
<dbReference type="Pfam" id="PF00202">
    <property type="entry name" value="Aminotran_3"/>
    <property type="match status" value="1"/>
</dbReference>
<dbReference type="SUPFAM" id="SSF53383">
    <property type="entry name" value="PLP-dependent transferases"/>
    <property type="match status" value="1"/>
</dbReference>
<dbReference type="PROSITE" id="PS00600">
    <property type="entry name" value="AA_TRANSFER_CLASS_3"/>
    <property type="match status" value="1"/>
</dbReference>
<sequence>MPHLFSKACQYFPGGVNSPVRACRSVDITPPVVTRASGDFFTDSQGKTYIDFCGSWGSLIHGHSHPYICEAIQQGLQRGCSYGLTSEQEISFAEEIFSYLEISNDHKIRFMSTGSEATMTAVRLARGVTERPIIIKFSGCYHGHSDVFLQEIHFQQTILDTVDLTQPLTLSLPFNNLSLFLDVMNQIGHRVAGVIFEPICANMGVVLPLPGFIEGIIQTCRKTGSLSIMDEVVTGFRVSKGGAAALHPLKPDILVFGKILGGGLPASAVCAPAAIMDYLAPVGKVFQAGTLSGNPLAMSAGKASIALCREKNFYTQLSAIEDDFLSPIEQMIQQSGIPVTLVRYGNLFSFFFSENRPNNLKEVQLCNTDIFRTFYQQAFLKGIYLSPSPFEASFLSTAHSMENLNYAQQVLIESLEQACSLV</sequence>
<feature type="chain" id="PRO_0000120398" description="Glutamate-1-semialdehyde 2,1-aminomutase">
    <location>
        <begin position="1"/>
        <end position="422"/>
    </location>
</feature>
<feature type="modified residue" description="N6-(pyridoxal phosphate)lysine" evidence="1">
    <location>
        <position position="258"/>
    </location>
</feature>
<organism>
    <name type="scientific">Chlamydia muridarum (strain MoPn / Nigg)</name>
    <dbReference type="NCBI Taxonomy" id="243161"/>
    <lineage>
        <taxon>Bacteria</taxon>
        <taxon>Pseudomonadati</taxon>
        <taxon>Chlamydiota</taxon>
        <taxon>Chlamydiia</taxon>
        <taxon>Chlamydiales</taxon>
        <taxon>Chlamydiaceae</taxon>
        <taxon>Chlamydia/Chlamydophila group</taxon>
        <taxon>Chlamydia</taxon>
    </lineage>
</organism>